<organism>
    <name type="scientific">Bacillus subtilis (strain 168)</name>
    <dbReference type="NCBI Taxonomy" id="224308"/>
    <lineage>
        <taxon>Bacteria</taxon>
        <taxon>Bacillati</taxon>
        <taxon>Bacillota</taxon>
        <taxon>Bacilli</taxon>
        <taxon>Bacillales</taxon>
        <taxon>Bacillaceae</taxon>
        <taxon>Bacillus</taxon>
    </lineage>
</organism>
<comment type="catalytic activity">
    <reaction evidence="1">
        <text>N(2)-acetyl-L-ornithine + 2-oxoglutarate = N-acetyl-L-glutamate 5-semialdehyde + L-glutamate</text>
        <dbReference type="Rhea" id="RHEA:18049"/>
        <dbReference type="ChEBI" id="CHEBI:16810"/>
        <dbReference type="ChEBI" id="CHEBI:29123"/>
        <dbReference type="ChEBI" id="CHEBI:29985"/>
        <dbReference type="ChEBI" id="CHEBI:57805"/>
        <dbReference type="EC" id="2.6.1.11"/>
    </reaction>
</comment>
<comment type="cofactor">
    <cofactor evidence="1">
        <name>pyridoxal 5'-phosphate</name>
        <dbReference type="ChEBI" id="CHEBI:597326"/>
    </cofactor>
    <text evidence="1">Binds 1 pyridoxal phosphate per subunit.</text>
</comment>
<comment type="pathway">
    <text evidence="1">Amino-acid biosynthesis; L-arginine biosynthesis; N(2)-acetyl-L-ornithine from L-glutamate: step 4/4.</text>
</comment>
<comment type="subunit">
    <text evidence="1">Homodimer.</text>
</comment>
<comment type="subcellular location">
    <subcellularLocation>
        <location evidence="1">Cytoplasm</location>
    </subcellularLocation>
</comment>
<comment type="miscellaneous">
    <text evidence="1">May also have succinyldiaminopimelate aminotransferase activity, thus carrying out the corresponding step in lysine biosynthesis.</text>
</comment>
<comment type="similarity">
    <text evidence="1">Belongs to the class-III pyridoxal-phosphate-dependent aminotransferase family. ArgD subfamily.</text>
</comment>
<dbReference type="EC" id="2.6.1.11" evidence="1"/>
<dbReference type="EMBL" id="Z26919">
    <property type="protein sequence ID" value="CAA81546.1"/>
    <property type="molecule type" value="Genomic_DNA"/>
</dbReference>
<dbReference type="EMBL" id="AL009126">
    <property type="protein sequence ID" value="CAB12963.2"/>
    <property type="molecule type" value="Genomic_DNA"/>
</dbReference>
<dbReference type="PIR" id="I40375">
    <property type="entry name" value="I40375"/>
</dbReference>
<dbReference type="RefSeq" id="NP_389004.2">
    <property type="nucleotide sequence ID" value="NC_000964.3"/>
</dbReference>
<dbReference type="RefSeq" id="WP_003232985.1">
    <property type="nucleotide sequence ID" value="NZ_OZ025638.1"/>
</dbReference>
<dbReference type="SMR" id="P36839"/>
<dbReference type="FunCoup" id="P36839">
    <property type="interactions" value="664"/>
</dbReference>
<dbReference type="IntAct" id="P36839">
    <property type="interactions" value="1"/>
</dbReference>
<dbReference type="STRING" id="224308.BSU11220"/>
<dbReference type="PaxDb" id="224308-BSU11220"/>
<dbReference type="EnsemblBacteria" id="CAB12963">
    <property type="protein sequence ID" value="CAB12963"/>
    <property type="gene ID" value="BSU_11220"/>
</dbReference>
<dbReference type="GeneID" id="939357"/>
<dbReference type="KEGG" id="bsu:BSU11220"/>
<dbReference type="PATRIC" id="fig|224308.179.peg.1207"/>
<dbReference type="eggNOG" id="COG4992">
    <property type="taxonomic scope" value="Bacteria"/>
</dbReference>
<dbReference type="InParanoid" id="P36839"/>
<dbReference type="OrthoDB" id="9807885at2"/>
<dbReference type="PhylomeDB" id="P36839"/>
<dbReference type="BioCyc" id="BSUB:BSU11220-MONOMER"/>
<dbReference type="UniPathway" id="UPA00068">
    <property type="reaction ID" value="UER00109"/>
</dbReference>
<dbReference type="Proteomes" id="UP000001570">
    <property type="component" value="Chromosome"/>
</dbReference>
<dbReference type="GO" id="GO:0005737">
    <property type="term" value="C:cytoplasm"/>
    <property type="evidence" value="ECO:0007669"/>
    <property type="project" value="UniProtKB-SubCell"/>
</dbReference>
<dbReference type="GO" id="GO:0042802">
    <property type="term" value="F:identical protein binding"/>
    <property type="evidence" value="ECO:0000318"/>
    <property type="project" value="GO_Central"/>
</dbReference>
<dbReference type="GO" id="GO:0003992">
    <property type="term" value="F:N2-acetyl-L-ornithine:2-oxoglutarate 5-aminotransferase activity"/>
    <property type="evidence" value="ECO:0007669"/>
    <property type="project" value="UniProtKB-UniRule"/>
</dbReference>
<dbReference type="GO" id="GO:0030170">
    <property type="term" value="F:pyridoxal phosphate binding"/>
    <property type="evidence" value="ECO:0000318"/>
    <property type="project" value="GO_Central"/>
</dbReference>
<dbReference type="GO" id="GO:0006526">
    <property type="term" value="P:L-arginine biosynthetic process"/>
    <property type="evidence" value="ECO:0007669"/>
    <property type="project" value="UniProtKB-UniRule"/>
</dbReference>
<dbReference type="CDD" id="cd00610">
    <property type="entry name" value="OAT_like"/>
    <property type="match status" value="1"/>
</dbReference>
<dbReference type="FunFam" id="3.40.640.10:FF:000004">
    <property type="entry name" value="Acetylornithine aminotransferase"/>
    <property type="match status" value="1"/>
</dbReference>
<dbReference type="Gene3D" id="3.90.1150.10">
    <property type="entry name" value="Aspartate Aminotransferase, domain 1"/>
    <property type="match status" value="1"/>
</dbReference>
<dbReference type="Gene3D" id="3.40.640.10">
    <property type="entry name" value="Type I PLP-dependent aspartate aminotransferase-like (Major domain)"/>
    <property type="match status" value="1"/>
</dbReference>
<dbReference type="HAMAP" id="MF_01107">
    <property type="entry name" value="ArgD_aminotrans_3"/>
    <property type="match status" value="1"/>
</dbReference>
<dbReference type="InterPro" id="IPR004636">
    <property type="entry name" value="AcOrn/SuccOrn_fam"/>
</dbReference>
<dbReference type="InterPro" id="IPR005814">
    <property type="entry name" value="Aminotrans_3"/>
</dbReference>
<dbReference type="InterPro" id="IPR049704">
    <property type="entry name" value="Aminotrans_3_PPA_site"/>
</dbReference>
<dbReference type="InterPro" id="IPR050103">
    <property type="entry name" value="Class-III_PLP-dep_AT"/>
</dbReference>
<dbReference type="InterPro" id="IPR015424">
    <property type="entry name" value="PyrdxlP-dep_Trfase"/>
</dbReference>
<dbReference type="InterPro" id="IPR015421">
    <property type="entry name" value="PyrdxlP-dep_Trfase_major"/>
</dbReference>
<dbReference type="InterPro" id="IPR015422">
    <property type="entry name" value="PyrdxlP-dep_Trfase_small"/>
</dbReference>
<dbReference type="NCBIfam" id="TIGR00707">
    <property type="entry name" value="argD"/>
    <property type="match status" value="1"/>
</dbReference>
<dbReference type="NCBIfam" id="NF002325">
    <property type="entry name" value="PRK01278.1"/>
    <property type="match status" value="1"/>
</dbReference>
<dbReference type="NCBIfam" id="NF002797">
    <property type="entry name" value="PRK02936.1"/>
    <property type="match status" value="1"/>
</dbReference>
<dbReference type="PANTHER" id="PTHR11986:SF79">
    <property type="entry name" value="ACETYLORNITHINE AMINOTRANSFERASE, MITOCHONDRIAL"/>
    <property type="match status" value="1"/>
</dbReference>
<dbReference type="PANTHER" id="PTHR11986">
    <property type="entry name" value="AMINOTRANSFERASE CLASS III"/>
    <property type="match status" value="1"/>
</dbReference>
<dbReference type="Pfam" id="PF00202">
    <property type="entry name" value="Aminotran_3"/>
    <property type="match status" value="1"/>
</dbReference>
<dbReference type="PIRSF" id="PIRSF000521">
    <property type="entry name" value="Transaminase_4ab_Lys_Orn"/>
    <property type="match status" value="1"/>
</dbReference>
<dbReference type="SUPFAM" id="SSF53383">
    <property type="entry name" value="PLP-dependent transferases"/>
    <property type="match status" value="1"/>
</dbReference>
<dbReference type="PROSITE" id="PS00600">
    <property type="entry name" value="AA_TRANSFER_CLASS_3"/>
    <property type="match status" value="1"/>
</dbReference>
<evidence type="ECO:0000255" key="1">
    <source>
        <dbReference type="HAMAP-Rule" id="MF_01107"/>
    </source>
</evidence>
<evidence type="ECO:0000305" key="2"/>
<gene>
    <name evidence="1" type="primary">argD</name>
    <name type="ordered locus">BSU11220</name>
</gene>
<sequence length="385" mass="40978">MSSLFQTYGRWDIDIKKAKGTYVEDQNGKTYLDFIQGIAVSNLGHCHEAVTEAVKKQLDSVWHVSNLFQNSLQEQAAQKLAAHSAGDLVFFCNSGAEANEGAIKLARKATGKTKIITFLQSFHGRTYAGMAATGQDKIKTGFGPMLGGFHYLPYNDPSAFKALGEEGDIAAVMLETVQGEGGVNPASAEFLSAVQSFCKEKQALLIIDEIQTGIGRTGKGFAYEHFGLSPDIITVAKGLGNGFPVGAVIGKKQLGEAFTPGSHGTTFGGNMLAMAAVNATLQIVFQPDFLQEAADKGAFLKEQLEAELKSPFVKQIRGKGLMLGIECDGPVADIIAELQTLGLLVLPAGPNVIRLLPPLTVTKDEIAEAVSKLKQAIAHHSAVNQ</sequence>
<protein>
    <recommendedName>
        <fullName evidence="1">Acetylornithine aminotransferase</fullName>
        <shortName evidence="1">ACOAT</shortName>
        <ecNumber evidence="1">2.6.1.11</ecNumber>
    </recommendedName>
</protein>
<name>ARGD_BACSU</name>
<keyword id="KW-0028">Amino-acid biosynthesis</keyword>
<keyword id="KW-0032">Aminotransferase</keyword>
<keyword id="KW-0055">Arginine biosynthesis</keyword>
<keyword id="KW-0963">Cytoplasm</keyword>
<keyword id="KW-0663">Pyridoxal phosphate</keyword>
<keyword id="KW-1185">Reference proteome</keyword>
<keyword id="KW-0808">Transferase</keyword>
<accession>P36839</accession>
<feature type="chain" id="PRO_0000112721" description="Acetylornithine aminotransferase">
    <location>
        <begin position="1"/>
        <end position="385"/>
    </location>
</feature>
<feature type="binding site" evidence="1">
    <location>
        <begin position="95"/>
        <end position="96"/>
    </location>
    <ligand>
        <name>pyridoxal 5'-phosphate</name>
        <dbReference type="ChEBI" id="CHEBI:597326"/>
    </ligand>
</feature>
<feature type="binding site" evidence="1">
    <location>
        <position position="122"/>
    </location>
    <ligand>
        <name>pyridoxal 5'-phosphate</name>
        <dbReference type="ChEBI" id="CHEBI:597326"/>
    </ligand>
</feature>
<feature type="binding site" evidence="1">
    <location>
        <position position="125"/>
    </location>
    <ligand>
        <name>N(2)-acetyl-L-ornithine</name>
        <dbReference type="ChEBI" id="CHEBI:57805"/>
    </ligand>
</feature>
<feature type="binding site" evidence="1">
    <location>
        <begin position="208"/>
        <end position="211"/>
    </location>
    <ligand>
        <name>pyridoxal 5'-phosphate</name>
        <dbReference type="ChEBI" id="CHEBI:597326"/>
    </ligand>
</feature>
<feature type="binding site" evidence="1">
    <location>
        <position position="265"/>
    </location>
    <ligand>
        <name>N(2)-acetyl-L-ornithine</name>
        <dbReference type="ChEBI" id="CHEBI:57805"/>
    </ligand>
</feature>
<feature type="binding site" evidence="1">
    <location>
        <position position="266"/>
    </location>
    <ligand>
        <name>pyridoxal 5'-phosphate</name>
        <dbReference type="ChEBI" id="CHEBI:597326"/>
    </ligand>
</feature>
<feature type="modified residue" description="N6-(pyridoxal phosphate)lysine" evidence="1">
    <location>
        <position position="237"/>
    </location>
</feature>
<feature type="sequence conflict" description="In Ref. 1; CAA81546." evidence="2" ref="1">
    <original>A</original>
    <variation>G</variation>
    <location>
        <position position="82"/>
    </location>
</feature>
<feature type="sequence conflict" description="In Ref. 1; CAA81546." evidence="2" ref="1">
    <original>AE</original>
    <variation>GQ</variation>
    <location>
        <begin position="96"/>
        <end position="97"/>
    </location>
</feature>
<feature type="sequence conflict" description="In Ref. 1; CAA81546." evidence="2" ref="1">
    <original>I</original>
    <variation>Y</variation>
    <location>
        <position position="103"/>
    </location>
</feature>
<feature type="sequence conflict" description="In Ref. 1; CAA81546." evidence="2" ref="1">
    <original>NVIRLLP</original>
    <variation>ERDSAAA</variation>
    <location>
        <begin position="351"/>
        <end position="357"/>
    </location>
</feature>
<proteinExistence type="inferred from homology"/>
<reference key="1">
    <citation type="journal article" date="1994" name="Microbiology">
        <title>Sequence and analysis of the citrulline biosynthetic operon argC-F from Bacillus subtilis.</title>
        <authorList>
            <person name="O'Reilly M."/>
            <person name="Devine K.M."/>
        </authorList>
    </citation>
    <scope>NUCLEOTIDE SEQUENCE [GENOMIC DNA]</scope>
    <source>
        <strain>168</strain>
    </source>
</reference>
<reference key="2">
    <citation type="journal article" date="1997" name="Nature">
        <title>The complete genome sequence of the Gram-positive bacterium Bacillus subtilis.</title>
        <authorList>
            <person name="Kunst F."/>
            <person name="Ogasawara N."/>
            <person name="Moszer I."/>
            <person name="Albertini A.M."/>
            <person name="Alloni G."/>
            <person name="Azevedo V."/>
            <person name="Bertero M.G."/>
            <person name="Bessieres P."/>
            <person name="Bolotin A."/>
            <person name="Borchert S."/>
            <person name="Borriss R."/>
            <person name="Boursier L."/>
            <person name="Brans A."/>
            <person name="Braun M."/>
            <person name="Brignell S.C."/>
            <person name="Bron S."/>
            <person name="Brouillet S."/>
            <person name="Bruschi C.V."/>
            <person name="Caldwell B."/>
            <person name="Capuano V."/>
            <person name="Carter N.M."/>
            <person name="Choi S.-K."/>
            <person name="Codani J.-J."/>
            <person name="Connerton I.F."/>
            <person name="Cummings N.J."/>
            <person name="Daniel R.A."/>
            <person name="Denizot F."/>
            <person name="Devine K.M."/>
            <person name="Duesterhoeft A."/>
            <person name="Ehrlich S.D."/>
            <person name="Emmerson P.T."/>
            <person name="Entian K.-D."/>
            <person name="Errington J."/>
            <person name="Fabret C."/>
            <person name="Ferrari E."/>
            <person name="Foulger D."/>
            <person name="Fritz C."/>
            <person name="Fujita M."/>
            <person name="Fujita Y."/>
            <person name="Fuma S."/>
            <person name="Galizzi A."/>
            <person name="Galleron N."/>
            <person name="Ghim S.-Y."/>
            <person name="Glaser P."/>
            <person name="Goffeau A."/>
            <person name="Golightly E.J."/>
            <person name="Grandi G."/>
            <person name="Guiseppi G."/>
            <person name="Guy B.J."/>
            <person name="Haga K."/>
            <person name="Haiech J."/>
            <person name="Harwood C.R."/>
            <person name="Henaut A."/>
            <person name="Hilbert H."/>
            <person name="Holsappel S."/>
            <person name="Hosono S."/>
            <person name="Hullo M.-F."/>
            <person name="Itaya M."/>
            <person name="Jones L.-M."/>
            <person name="Joris B."/>
            <person name="Karamata D."/>
            <person name="Kasahara Y."/>
            <person name="Klaerr-Blanchard M."/>
            <person name="Klein C."/>
            <person name="Kobayashi Y."/>
            <person name="Koetter P."/>
            <person name="Koningstein G."/>
            <person name="Krogh S."/>
            <person name="Kumano M."/>
            <person name="Kurita K."/>
            <person name="Lapidus A."/>
            <person name="Lardinois S."/>
            <person name="Lauber J."/>
            <person name="Lazarevic V."/>
            <person name="Lee S.-M."/>
            <person name="Levine A."/>
            <person name="Liu H."/>
            <person name="Masuda S."/>
            <person name="Mauel C."/>
            <person name="Medigue C."/>
            <person name="Medina N."/>
            <person name="Mellado R.P."/>
            <person name="Mizuno M."/>
            <person name="Moestl D."/>
            <person name="Nakai S."/>
            <person name="Noback M."/>
            <person name="Noone D."/>
            <person name="O'Reilly M."/>
            <person name="Ogawa K."/>
            <person name="Ogiwara A."/>
            <person name="Oudega B."/>
            <person name="Park S.-H."/>
            <person name="Parro V."/>
            <person name="Pohl T.M."/>
            <person name="Portetelle D."/>
            <person name="Porwollik S."/>
            <person name="Prescott A.M."/>
            <person name="Presecan E."/>
            <person name="Pujic P."/>
            <person name="Purnelle B."/>
            <person name="Rapoport G."/>
            <person name="Rey M."/>
            <person name="Reynolds S."/>
            <person name="Rieger M."/>
            <person name="Rivolta C."/>
            <person name="Rocha E."/>
            <person name="Roche B."/>
            <person name="Rose M."/>
            <person name="Sadaie Y."/>
            <person name="Sato T."/>
            <person name="Scanlan E."/>
            <person name="Schleich S."/>
            <person name="Schroeter R."/>
            <person name="Scoffone F."/>
            <person name="Sekiguchi J."/>
            <person name="Sekowska A."/>
            <person name="Seror S.J."/>
            <person name="Serror P."/>
            <person name="Shin B.-S."/>
            <person name="Soldo B."/>
            <person name="Sorokin A."/>
            <person name="Tacconi E."/>
            <person name="Takagi T."/>
            <person name="Takahashi H."/>
            <person name="Takemaru K."/>
            <person name="Takeuchi M."/>
            <person name="Tamakoshi A."/>
            <person name="Tanaka T."/>
            <person name="Terpstra P."/>
            <person name="Tognoni A."/>
            <person name="Tosato V."/>
            <person name="Uchiyama S."/>
            <person name="Vandenbol M."/>
            <person name="Vannier F."/>
            <person name="Vassarotti A."/>
            <person name="Viari A."/>
            <person name="Wambutt R."/>
            <person name="Wedler E."/>
            <person name="Wedler H."/>
            <person name="Weitzenegger T."/>
            <person name="Winters P."/>
            <person name="Wipat A."/>
            <person name="Yamamoto H."/>
            <person name="Yamane K."/>
            <person name="Yasumoto K."/>
            <person name="Yata K."/>
            <person name="Yoshida K."/>
            <person name="Yoshikawa H.-F."/>
            <person name="Zumstein E."/>
            <person name="Yoshikawa H."/>
            <person name="Danchin A."/>
        </authorList>
    </citation>
    <scope>NUCLEOTIDE SEQUENCE [LARGE SCALE GENOMIC DNA]</scope>
    <source>
        <strain>168</strain>
    </source>
</reference>
<reference key="3">
    <citation type="journal article" date="2009" name="Microbiology">
        <title>From a consortium sequence to a unified sequence: the Bacillus subtilis 168 reference genome a decade later.</title>
        <authorList>
            <person name="Barbe V."/>
            <person name="Cruveiller S."/>
            <person name="Kunst F."/>
            <person name="Lenoble P."/>
            <person name="Meurice G."/>
            <person name="Sekowska A."/>
            <person name="Vallenet D."/>
            <person name="Wang T."/>
            <person name="Moszer I."/>
            <person name="Medigue C."/>
            <person name="Danchin A."/>
        </authorList>
    </citation>
    <scope>SEQUENCE REVISION TO 82; 96-97; 103 AND 351-357</scope>
</reference>